<organism>
    <name type="scientific">Salmonella paratyphi A (strain ATCC 9150 / SARB42)</name>
    <dbReference type="NCBI Taxonomy" id="295319"/>
    <lineage>
        <taxon>Bacteria</taxon>
        <taxon>Pseudomonadati</taxon>
        <taxon>Pseudomonadota</taxon>
        <taxon>Gammaproteobacteria</taxon>
        <taxon>Enterobacterales</taxon>
        <taxon>Enterobacteriaceae</taxon>
        <taxon>Salmonella</taxon>
    </lineage>
</organism>
<reference key="1">
    <citation type="journal article" date="2004" name="Nat. Genet.">
        <title>Comparison of genome degradation in Paratyphi A and Typhi, human-restricted serovars of Salmonella enterica that cause typhoid.</title>
        <authorList>
            <person name="McClelland M."/>
            <person name="Sanderson K.E."/>
            <person name="Clifton S.W."/>
            <person name="Latreille P."/>
            <person name="Porwollik S."/>
            <person name="Sabo A."/>
            <person name="Meyer R."/>
            <person name="Bieri T."/>
            <person name="Ozersky P."/>
            <person name="McLellan M."/>
            <person name="Harkins C.R."/>
            <person name="Wang C."/>
            <person name="Nguyen C."/>
            <person name="Berghoff A."/>
            <person name="Elliott G."/>
            <person name="Kohlberg S."/>
            <person name="Strong C."/>
            <person name="Du F."/>
            <person name="Carter J."/>
            <person name="Kremizki C."/>
            <person name="Layman D."/>
            <person name="Leonard S."/>
            <person name="Sun H."/>
            <person name="Fulton L."/>
            <person name="Nash W."/>
            <person name="Miner T."/>
            <person name="Minx P."/>
            <person name="Delehaunty K."/>
            <person name="Fronick C."/>
            <person name="Magrini V."/>
            <person name="Nhan M."/>
            <person name="Warren W."/>
            <person name="Florea L."/>
            <person name="Spieth J."/>
            <person name="Wilson R.K."/>
        </authorList>
    </citation>
    <scope>NUCLEOTIDE SEQUENCE [LARGE SCALE GENOMIC DNA]</scope>
    <source>
        <strain>ATCC 9150 / SARB42</strain>
    </source>
</reference>
<sequence length="570" mass="63605">MIPPEIRRSVLLQKAIKLALAGTLLTFASFSATAADPSSDTETPQPPDILLGPLFNDVQNAKLFPDQKTFADAIPNSDPLMILADYRMQRNQSGFDLRHFVDVNFTLPKAGEKYVPPAGQSLREHIDGLWPVLTRSTKNVEKWDSLLPLPESYVVPGGRFREIYYWDSYFTMLGLAESGHWDKVADMVANFGYEIDAWGHIPNGNRTYYLSRSQPPFFAFMVELLAQHEGDDALKEYLPQLQKEYAYWMEGVETLQPGQQNQRVVKLEDGSVLNRYWDDRDTPRPESWVEDIATAKSNPNRPATEIYRDLRSAAASGWDFSSRWMDNPQQLSTIRTTTIVPVDLNALLYQLEKTLARASAAAGDRAKASQYDALANARQKAIEMHLWNNKEGWYADYDLQNNKIRDQLTAAALFPLYVNAAAKDRAVKVAAAAQAHLLQPGGLATTSVKSGQQWDAPNGWAPLQWVAAEGLQNYGQDDVAMEVTWRFLTNVQHTYDREKKLVEKYDVSSTGTGGGGGEYPLQDGFGWTNGVTLKMLDLICPQEKPCDSVPSTRPASLSATPTKTPSAATQ</sequence>
<name>TREA_SALPA</name>
<feature type="signal peptide" evidence="1">
    <location>
        <begin position="1"/>
        <end position="34"/>
    </location>
</feature>
<feature type="chain" id="PRO_1000064456" description="Periplasmic trehalase">
    <location>
        <begin position="35"/>
        <end position="570"/>
    </location>
</feature>
<feature type="region of interest" description="Disordered" evidence="2">
    <location>
        <begin position="544"/>
        <end position="570"/>
    </location>
</feature>
<feature type="compositionally biased region" description="Low complexity" evidence="2">
    <location>
        <begin position="554"/>
        <end position="570"/>
    </location>
</feature>
<feature type="active site" description="Proton donor/acceptor" evidence="1">
    <location>
        <position position="319"/>
    </location>
</feature>
<feature type="active site" description="Proton donor/acceptor" evidence="1">
    <location>
        <position position="503"/>
    </location>
</feature>
<feature type="binding site" evidence="1">
    <location>
        <position position="159"/>
    </location>
    <ligand>
        <name>substrate</name>
    </ligand>
</feature>
<feature type="binding site" evidence="1">
    <location>
        <begin position="166"/>
        <end position="167"/>
    </location>
    <ligand>
        <name>substrate</name>
    </ligand>
</feature>
<feature type="binding site" evidence="1">
    <location>
        <position position="203"/>
    </location>
    <ligand>
        <name>substrate</name>
    </ligand>
</feature>
<feature type="binding site" evidence="1">
    <location>
        <begin position="212"/>
        <end position="214"/>
    </location>
    <ligand>
        <name>substrate</name>
    </ligand>
</feature>
<feature type="binding site" evidence="1">
    <location>
        <begin position="284"/>
        <end position="286"/>
    </location>
    <ligand>
        <name>substrate</name>
    </ligand>
</feature>
<feature type="binding site" evidence="1">
    <location>
        <position position="317"/>
    </location>
    <ligand>
        <name>substrate</name>
    </ligand>
</feature>
<feature type="binding site" evidence="1">
    <location>
        <position position="518"/>
    </location>
    <ligand>
        <name>substrate</name>
    </ligand>
</feature>
<evidence type="ECO:0000255" key="1">
    <source>
        <dbReference type="HAMAP-Rule" id="MF_01060"/>
    </source>
</evidence>
<evidence type="ECO:0000256" key="2">
    <source>
        <dbReference type="SAM" id="MobiDB-lite"/>
    </source>
</evidence>
<accession>Q5PI73</accession>
<protein>
    <recommendedName>
        <fullName evidence="1">Periplasmic trehalase</fullName>
        <ecNumber evidence="1">3.2.1.28</ecNumber>
    </recommendedName>
    <alternativeName>
        <fullName evidence="1">Alpha,alpha-trehalase</fullName>
    </alternativeName>
    <alternativeName>
        <fullName evidence="1">Alpha,alpha-trehalose glucohydrolase</fullName>
    </alternativeName>
</protein>
<dbReference type="EC" id="3.2.1.28" evidence="1"/>
<dbReference type="EMBL" id="CP000026">
    <property type="protein sequence ID" value="AAV77047.1"/>
    <property type="molecule type" value="Genomic_DNA"/>
</dbReference>
<dbReference type="RefSeq" id="WP_000612832.1">
    <property type="nucleotide sequence ID" value="NC_006511.1"/>
</dbReference>
<dbReference type="SMR" id="Q5PI73"/>
<dbReference type="CAZy" id="GH37">
    <property type="family name" value="Glycoside Hydrolase Family 37"/>
</dbReference>
<dbReference type="KEGG" id="spt:SPA1077"/>
<dbReference type="HOGENOM" id="CLU_006451_3_1_6"/>
<dbReference type="Proteomes" id="UP000008185">
    <property type="component" value="Chromosome"/>
</dbReference>
<dbReference type="GO" id="GO:0042597">
    <property type="term" value="C:periplasmic space"/>
    <property type="evidence" value="ECO:0007669"/>
    <property type="project" value="UniProtKB-SubCell"/>
</dbReference>
<dbReference type="GO" id="GO:0004555">
    <property type="term" value="F:alpha,alpha-trehalase activity"/>
    <property type="evidence" value="ECO:0007669"/>
    <property type="project" value="UniProtKB-UniRule"/>
</dbReference>
<dbReference type="GO" id="GO:0071474">
    <property type="term" value="P:cellular hyperosmotic response"/>
    <property type="evidence" value="ECO:0007669"/>
    <property type="project" value="InterPro"/>
</dbReference>
<dbReference type="GO" id="GO:0005993">
    <property type="term" value="P:trehalose catabolic process"/>
    <property type="evidence" value="ECO:0007669"/>
    <property type="project" value="InterPro"/>
</dbReference>
<dbReference type="FunFam" id="1.50.10.10:FF:000003">
    <property type="entry name" value="Cytoplasmic trehalase"/>
    <property type="match status" value="1"/>
</dbReference>
<dbReference type="Gene3D" id="1.50.10.10">
    <property type="match status" value="1"/>
</dbReference>
<dbReference type="HAMAP" id="MF_01060">
    <property type="entry name" value="Peripl_trehalase"/>
    <property type="match status" value="1"/>
</dbReference>
<dbReference type="InterPro" id="IPR008928">
    <property type="entry name" value="6-hairpin_glycosidase_sf"/>
</dbReference>
<dbReference type="InterPro" id="IPR012341">
    <property type="entry name" value="6hp_glycosidase-like_sf"/>
</dbReference>
<dbReference type="InterPro" id="IPR001661">
    <property type="entry name" value="Glyco_hydro_37"/>
</dbReference>
<dbReference type="InterPro" id="IPR018232">
    <property type="entry name" value="Glyco_hydro_37_CS"/>
</dbReference>
<dbReference type="InterPro" id="IPR023720">
    <property type="entry name" value="Trehalase_periplasmic"/>
</dbReference>
<dbReference type="NCBIfam" id="NF009773">
    <property type="entry name" value="PRK13270.1"/>
    <property type="match status" value="1"/>
</dbReference>
<dbReference type="NCBIfam" id="NF009774">
    <property type="entry name" value="PRK13271.1"/>
    <property type="match status" value="1"/>
</dbReference>
<dbReference type="PANTHER" id="PTHR23403">
    <property type="entry name" value="TREHALASE"/>
    <property type="match status" value="1"/>
</dbReference>
<dbReference type="PANTHER" id="PTHR23403:SF1">
    <property type="entry name" value="TREHALASE"/>
    <property type="match status" value="1"/>
</dbReference>
<dbReference type="Pfam" id="PF01204">
    <property type="entry name" value="Trehalase"/>
    <property type="match status" value="1"/>
</dbReference>
<dbReference type="PRINTS" id="PR00744">
    <property type="entry name" value="GLHYDRLASE37"/>
</dbReference>
<dbReference type="SUPFAM" id="SSF48208">
    <property type="entry name" value="Six-hairpin glycosidases"/>
    <property type="match status" value="1"/>
</dbReference>
<dbReference type="PROSITE" id="PS00927">
    <property type="entry name" value="TREHALASE_1"/>
    <property type="match status" value="1"/>
</dbReference>
<dbReference type="PROSITE" id="PS00928">
    <property type="entry name" value="TREHALASE_2"/>
    <property type="match status" value="1"/>
</dbReference>
<keyword id="KW-0326">Glycosidase</keyword>
<keyword id="KW-0378">Hydrolase</keyword>
<keyword id="KW-0574">Periplasm</keyword>
<keyword id="KW-0732">Signal</keyword>
<comment type="function">
    <text evidence="1">Provides the cells with the ability to utilize trehalose at high osmolarity by splitting it into glucose molecules that can subsequently be taken up by the phosphotransferase-mediated uptake system.</text>
</comment>
<comment type="catalytic activity">
    <reaction evidence="1">
        <text>alpha,alpha-trehalose + H2O = alpha-D-glucose + beta-D-glucose</text>
        <dbReference type="Rhea" id="RHEA:32675"/>
        <dbReference type="ChEBI" id="CHEBI:15377"/>
        <dbReference type="ChEBI" id="CHEBI:15903"/>
        <dbReference type="ChEBI" id="CHEBI:16551"/>
        <dbReference type="ChEBI" id="CHEBI:17925"/>
        <dbReference type="EC" id="3.2.1.28"/>
    </reaction>
</comment>
<comment type="subunit">
    <text evidence="1">Monomer.</text>
</comment>
<comment type="subcellular location">
    <subcellularLocation>
        <location evidence="1">Periplasm</location>
    </subcellularLocation>
</comment>
<comment type="similarity">
    <text evidence="1">Belongs to the glycosyl hydrolase 37 family.</text>
</comment>
<proteinExistence type="inferred from homology"/>
<gene>
    <name evidence="1" type="primary">treA</name>
    <name type="ordered locus">SPA1077</name>
</gene>